<feature type="chain" id="PRO_0000060722" description="Cytochrome b">
    <location>
        <begin position="1"/>
        <end position="379"/>
    </location>
</feature>
<feature type="transmembrane region" description="Helical" evidence="2">
    <location>
        <begin position="33"/>
        <end position="53"/>
    </location>
</feature>
<feature type="transmembrane region" description="Helical" evidence="2">
    <location>
        <begin position="77"/>
        <end position="98"/>
    </location>
</feature>
<feature type="transmembrane region" description="Helical" evidence="2">
    <location>
        <begin position="113"/>
        <end position="133"/>
    </location>
</feature>
<feature type="transmembrane region" description="Helical" evidence="2">
    <location>
        <begin position="178"/>
        <end position="198"/>
    </location>
</feature>
<feature type="transmembrane region" description="Helical" evidence="2">
    <location>
        <begin position="226"/>
        <end position="246"/>
    </location>
</feature>
<feature type="transmembrane region" description="Helical" evidence="2">
    <location>
        <begin position="288"/>
        <end position="308"/>
    </location>
</feature>
<feature type="transmembrane region" description="Helical" evidence="2">
    <location>
        <begin position="320"/>
        <end position="340"/>
    </location>
</feature>
<feature type="transmembrane region" description="Helical" evidence="2">
    <location>
        <begin position="347"/>
        <end position="367"/>
    </location>
</feature>
<feature type="binding site" description="axial binding residue" evidence="2">
    <location>
        <position position="83"/>
    </location>
    <ligand>
        <name>heme b</name>
        <dbReference type="ChEBI" id="CHEBI:60344"/>
        <label>b562</label>
    </ligand>
    <ligandPart>
        <name>Fe</name>
        <dbReference type="ChEBI" id="CHEBI:18248"/>
    </ligandPart>
</feature>
<feature type="binding site" description="axial binding residue" evidence="2">
    <location>
        <position position="97"/>
    </location>
    <ligand>
        <name>heme b</name>
        <dbReference type="ChEBI" id="CHEBI:60344"/>
        <label>b566</label>
    </ligand>
    <ligandPart>
        <name>Fe</name>
        <dbReference type="ChEBI" id="CHEBI:18248"/>
    </ligandPart>
</feature>
<feature type="binding site" description="axial binding residue" evidence="2">
    <location>
        <position position="182"/>
    </location>
    <ligand>
        <name>heme b</name>
        <dbReference type="ChEBI" id="CHEBI:60344"/>
        <label>b562</label>
    </ligand>
    <ligandPart>
        <name>Fe</name>
        <dbReference type="ChEBI" id="CHEBI:18248"/>
    </ligandPart>
</feature>
<feature type="binding site" description="axial binding residue" evidence="2">
    <location>
        <position position="196"/>
    </location>
    <ligand>
        <name>heme b</name>
        <dbReference type="ChEBI" id="CHEBI:60344"/>
        <label>b566</label>
    </ligand>
    <ligandPart>
        <name>Fe</name>
        <dbReference type="ChEBI" id="CHEBI:18248"/>
    </ligandPart>
</feature>
<feature type="binding site" evidence="2">
    <location>
        <position position="201"/>
    </location>
    <ligand>
        <name>a ubiquinone</name>
        <dbReference type="ChEBI" id="CHEBI:16389"/>
    </ligand>
</feature>
<dbReference type="EMBL" id="AF034738">
    <property type="protein sequence ID" value="AAC31693.1"/>
    <property type="molecule type" value="Genomic_DNA"/>
</dbReference>
<dbReference type="RefSeq" id="YP_007625847.1">
    <property type="nucleotide sequence ID" value="NC_020683.1"/>
</dbReference>
<dbReference type="SMR" id="O78788"/>
<dbReference type="GeneID" id="15088157"/>
<dbReference type="CTD" id="4519"/>
<dbReference type="GO" id="GO:0005743">
    <property type="term" value="C:mitochondrial inner membrane"/>
    <property type="evidence" value="ECO:0007669"/>
    <property type="project" value="UniProtKB-SubCell"/>
</dbReference>
<dbReference type="GO" id="GO:0045275">
    <property type="term" value="C:respiratory chain complex III"/>
    <property type="evidence" value="ECO:0007669"/>
    <property type="project" value="InterPro"/>
</dbReference>
<dbReference type="GO" id="GO:0046872">
    <property type="term" value="F:metal ion binding"/>
    <property type="evidence" value="ECO:0007669"/>
    <property type="project" value="UniProtKB-KW"/>
</dbReference>
<dbReference type="GO" id="GO:0008121">
    <property type="term" value="F:ubiquinol-cytochrome-c reductase activity"/>
    <property type="evidence" value="ECO:0007669"/>
    <property type="project" value="InterPro"/>
</dbReference>
<dbReference type="GO" id="GO:0006122">
    <property type="term" value="P:mitochondrial electron transport, ubiquinol to cytochrome c"/>
    <property type="evidence" value="ECO:0007669"/>
    <property type="project" value="TreeGrafter"/>
</dbReference>
<dbReference type="CDD" id="cd00290">
    <property type="entry name" value="cytochrome_b_C"/>
    <property type="match status" value="1"/>
</dbReference>
<dbReference type="CDD" id="cd00284">
    <property type="entry name" value="Cytochrome_b_N"/>
    <property type="match status" value="1"/>
</dbReference>
<dbReference type="FunFam" id="1.20.810.10:FF:000002">
    <property type="entry name" value="Cytochrome b"/>
    <property type="match status" value="1"/>
</dbReference>
<dbReference type="Gene3D" id="1.20.810.10">
    <property type="entry name" value="Cytochrome Bc1 Complex, Chain C"/>
    <property type="match status" value="1"/>
</dbReference>
<dbReference type="InterPro" id="IPR005798">
    <property type="entry name" value="Cyt_b/b6_C"/>
</dbReference>
<dbReference type="InterPro" id="IPR036150">
    <property type="entry name" value="Cyt_b/b6_C_sf"/>
</dbReference>
<dbReference type="InterPro" id="IPR005797">
    <property type="entry name" value="Cyt_b/b6_N"/>
</dbReference>
<dbReference type="InterPro" id="IPR027387">
    <property type="entry name" value="Cytb/b6-like_sf"/>
</dbReference>
<dbReference type="InterPro" id="IPR030689">
    <property type="entry name" value="Cytochrome_b"/>
</dbReference>
<dbReference type="InterPro" id="IPR048260">
    <property type="entry name" value="Cytochrome_b_C_euk/bac"/>
</dbReference>
<dbReference type="InterPro" id="IPR048259">
    <property type="entry name" value="Cytochrome_b_N_euk/bac"/>
</dbReference>
<dbReference type="InterPro" id="IPR016174">
    <property type="entry name" value="Di-haem_cyt_TM"/>
</dbReference>
<dbReference type="PANTHER" id="PTHR19271">
    <property type="entry name" value="CYTOCHROME B"/>
    <property type="match status" value="1"/>
</dbReference>
<dbReference type="PANTHER" id="PTHR19271:SF16">
    <property type="entry name" value="CYTOCHROME B"/>
    <property type="match status" value="1"/>
</dbReference>
<dbReference type="Pfam" id="PF00032">
    <property type="entry name" value="Cytochrom_B_C"/>
    <property type="match status" value="1"/>
</dbReference>
<dbReference type="Pfam" id="PF00033">
    <property type="entry name" value="Cytochrome_B"/>
    <property type="match status" value="1"/>
</dbReference>
<dbReference type="PIRSF" id="PIRSF038885">
    <property type="entry name" value="COB"/>
    <property type="match status" value="1"/>
</dbReference>
<dbReference type="SUPFAM" id="SSF81648">
    <property type="entry name" value="a domain/subunit of cytochrome bc1 complex (Ubiquinol-cytochrome c reductase)"/>
    <property type="match status" value="1"/>
</dbReference>
<dbReference type="SUPFAM" id="SSF81342">
    <property type="entry name" value="Transmembrane di-heme cytochromes"/>
    <property type="match status" value="1"/>
</dbReference>
<dbReference type="PROSITE" id="PS51003">
    <property type="entry name" value="CYTB_CTER"/>
    <property type="match status" value="1"/>
</dbReference>
<dbReference type="PROSITE" id="PS51002">
    <property type="entry name" value="CYTB_NTER"/>
    <property type="match status" value="1"/>
</dbReference>
<organism>
    <name type="scientific">Capra caucasica</name>
    <name type="common">West Caucasian tur</name>
    <dbReference type="NCBI Taxonomy" id="72540"/>
    <lineage>
        <taxon>Eukaryota</taxon>
        <taxon>Metazoa</taxon>
        <taxon>Chordata</taxon>
        <taxon>Craniata</taxon>
        <taxon>Vertebrata</taxon>
        <taxon>Euteleostomi</taxon>
        <taxon>Mammalia</taxon>
        <taxon>Eutheria</taxon>
        <taxon>Laurasiatheria</taxon>
        <taxon>Artiodactyla</taxon>
        <taxon>Ruminantia</taxon>
        <taxon>Pecora</taxon>
        <taxon>Bovidae</taxon>
        <taxon>Caprinae</taxon>
        <taxon>Capra</taxon>
    </lineage>
</organism>
<sequence length="379" mass="42853">MTNIRKTHPLMKIVNNAFIDLPTPSNISSWWNFGSLLGICLILQILTGLFLAMHYTSDTMTAFSSVTHICRDVNYGWIIRYMHANGASMFFICLFMHVGRGLYYGSYTFLETWNIGVILLLATMATAFMGYVLPWGQMSFWGATVITNLLSAIPYIGTNLVEWVWGGFSVDKATLTRFFAFHFILPFIIAALAMVHLLFLHETGSNNPTGIPSDTDKIPFHPYYTIKDILGVMLLILVLMLLVLFTPDLLGDPDNYIPANPLNTPPHIKPEWYFLFAYAILRSIPNKLGGVLALVLSILILVLVPFLHTSKQRSMMFRPISQCMFWILVADLLTLTWIGGQPVEHPYIIIGQLASIMYFLIILVMMPVASTIENNLLKW</sequence>
<accession>O78788</accession>
<protein>
    <recommendedName>
        <fullName>Cytochrome b</fullName>
    </recommendedName>
    <alternativeName>
        <fullName>Complex III subunit 3</fullName>
    </alternativeName>
    <alternativeName>
        <fullName>Complex III subunit III</fullName>
    </alternativeName>
    <alternativeName>
        <fullName>Cytochrome b-c1 complex subunit 3</fullName>
    </alternativeName>
    <alternativeName>
        <fullName>Ubiquinol-cytochrome-c reductase complex cytochrome b subunit</fullName>
    </alternativeName>
</protein>
<evidence type="ECO:0000250" key="1"/>
<evidence type="ECO:0000250" key="2">
    <source>
        <dbReference type="UniProtKB" id="P00157"/>
    </source>
</evidence>
<evidence type="ECO:0000255" key="3">
    <source>
        <dbReference type="PROSITE-ProRule" id="PRU00967"/>
    </source>
</evidence>
<evidence type="ECO:0000255" key="4">
    <source>
        <dbReference type="PROSITE-ProRule" id="PRU00968"/>
    </source>
</evidence>
<proteinExistence type="inferred from homology"/>
<comment type="function">
    <text evidence="2">Component of the ubiquinol-cytochrome c reductase complex (complex III or cytochrome b-c1 complex) that is part of the mitochondrial respiratory chain. The b-c1 complex mediates electron transfer from ubiquinol to cytochrome c. Contributes to the generation of a proton gradient across the mitochondrial membrane that is then used for ATP synthesis.</text>
</comment>
<comment type="cofactor">
    <cofactor evidence="2">
        <name>heme b</name>
        <dbReference type="ChEBI" id="CHEBI:60344"/>
    </cofactor>
    <text evidence="2">Binds 2 heme b groups non-covalently.</text>
</comment>
<comment type="subunit">
    <text evidence="2">The cytochrome bc1 complex contains 11 subunits: 3 respiratory subunits (MT-CYB, CYC1 and UQCRFS1), 2 core proteins (UQCRC1 and UQCRC2) and 6 low-molecular weight proteins (UQCRH/QCR6, UQCRB/QCR7, UQCRQ/QCR8, UQCR10/QCR9, UQCR11/QCR10 and a cleavage product of UQCRFS1). This cytochrome bc1 complex then forms a dimer.</text>
</comment>
<comment type="subcellular location">
    <subcellularLocation>
        <location evidence="2">Mitochondrion inner membrane</location>
        <topology evidence="2">Multi-pass membrane protein</topology>
    </subcellularLocation>
</comment>
<comment type="miscellaneous">
    <text evidence="1">Heme 1 (or BL or b562) is low-potential and absorbs at about 562 nm, and heme 2 (or BH or b566) is high-potential and absorbs at about 566 nm.</text>
</comment>
<comment type="similarity">
    <text evidence="3 4">Belongs to the cytochrome b family.</text>
</comment>
<comment type="caution">
    <text evidence="2">The full-length protein contains only eight transmembrane helices, not nine as predicted by bioinformatics tools.</text>
</comment>
<reference key="1">
    <citation type="journal article" date="1998" name="J. Mammal. Evol.">
        <title>Molecular systematics of the subfamily Caprinae (Artiodactyla, Bovidae) as determined from cytochrome b sequences.</title>
        <authorList>
            <person name="Hassanin A."/>
            <person name="Pasquet E."/>
            <person name="Vigne J.-D."/>
        </authorList>
    </citation>
    <scope>NUCLEOTIDE SEQUENCE [GENOMIC DNA]</scope>
</reference>
<geneLocation type="mitochondrion"/>
<gene>
    <name type="primary">MT-CYB</name>
    <name type="synonym">COB</name>
    <name type="synonym">CYTB</name>
    <name type="synonym">MTCYB</name>
</gene>
<keyword id="KW-0249">Electron transport</keyword>
<keyword id="KW-0349">Heme</keyword>
<keyword id="KW-0408">Iron</keyword>
<keyword id="KW-0472">Membrane</keyword>
<keyword id="KW-0479">Metal-binding</keyword>
<keyword id="KW-0496">Mitochondrion</keyword>
<keyword id="KW-0999">Mitochondrion inner membrane</keyword>
<keyword id="KW-0679">Respiratory chain</keyword>
<keyword id="KW-0812">Transmembrane</keyword>
<keyword id="KW-1133">Transmembrane helix</keyword>
<keyword id="KW-0813">Transport</keyword>
<keyword id="KW-0830">Ubiquinone</keyword>
<name>CYB_CAPCU</name>